<keyword id="KW-0687">Ribonucleoprotein</keyword>
<keyword id="KW-0689">Ribosomal protein</keyword>
<feature type="chain" id="PRO_1000128788" description="Large ribosomal subunit protein bL27">
    <location>
        <begin position="1"/>
        <end position="86"/>
    </location>
</feature>
<feature type="region of interest" description="Disordered" evidence="2">
    <location>
        <begin position="1"/>
        <end position="20"/>
    </location>
</feature>
<feature type="compositionally biased region" description="Gly residues" evidence="2">
    <location>
        <begin position="1"/>
        <end position="10"/>
    </location>
</feature>
<gene>
    <name evidence="1" type="primary">rpmA</name>
    <name type="ordered locus">Pnec_0213</name>
</gene>
<protein>
    <recommendedName>
        <fullName evidence="1">Large ribosomal subunit protein bL27</fullName>
    </recommendedName>
    <alternativeName>
        <fullName evidence="3">50S ribosomal protein L27</fullName>
    </alternativeName>
</protein>
<name>RL27_POLNS</name>
<comment type="similarity">
    <text evidence="1">Belongs to the bacterial ribosomal protein bL27 family.</text>
</comment>
<accession>B1XT34</accession>
<sequence length="86" mass="9074">MAQKKGGGSTRNGRDSESKRLGVKVFGGEYINAGSIIIRQRGTRVHPGANVGIGKDHTLFALIDGQVEFGVKGALKKAQVSVLPRS</sequence>
<reference key="1">
    <citation type="journal article" date="2013" name="Proc. Natl. Acad. Sci. U.S.A.">
        <title>Polynucleobacter necessarius, a model for genome reduction in both free-living and symbiotic bacteria.</title>
        <authorList>
            <person name="Boscaro V."/>
            <person name="Felletti M."/>
            <person name="Vannini C."/>
            <person name="Ackerman M.S."/>
            <person name="Chain P.S."/>
            <person name="Malfatti S."/>
            <person name="Vergez L.M."/>
            <person name="Shin M."/>
            <person name="Doak T.G."/>
            <person name="Lynch M."/>
            <person name="Petroni G."/>
        </authorList>
    </citation>
    <scope>NUCLEOTIDE SEQUENCE [LARGE SCALE GENOMIC DNA]</scope>
    <source>
        <strain>STIR1</strain>
    </source>
</reference>
<organism>
    <name type="scientific">Polynucleobacter necessarius subsp. necessarius (strain STIR1)</name>
    <dbReference type="NCBI Taxonomy" id="452638"/>
    <lineage>
        <taxon>Bacteria</taxon>
        <taxon>Pseudomonadati</taxon>
        <taxon>Pseudomonadota</taxon>
        <taxon>Betaproteobacteria</taxon>
        <taxon>Burkholderiales</taxon>
        <taxon>Burkholderiaceae</taxon>
        <taxon>Polynucleobacter</taxon>
    </lineage>
</organism>
<proteinExistence type="inferred from homology"/>
<dbReference type="EMBL" id="CP001010">
    <property type="protein sequence ID" value="ACB43511.1"/>
    <property type="molecule type" value="Genomic_DNA"/>
</dbReference>
<dbReference type="SMR" id="B1XT34"/>
<dbReference type="STRING" id="452638.Pnec_0213"/>
<dbReference type="KEGG" id="pne:Pnec_0213"/>
<dbReference type="eggNOG" id="COG0211">
    <property type="taxonomic scope" value="Bacteria"/>
</dbReference>
<dbReference type="HOGENOM" id="CLU_095424_4_1_4"/>
<dbReference type="OrthoDB" id="9803474at2"/>
<dbReference type="GO" id="GO:0022625">
    <property type="term" value="C:cytosolic large ribosomal subunit"/>
    <property type="evidence" value="ECO:0007669"/>
    <property type="project" value="TreeGrafter"/>
</dbReference>
<dbReference type="GO" id="GO:0003735">
    <property type="term" value="F:structural constituent of ribosome"/>
    <property type="evidence" value="ECO:0007669"/>
    <property type="project" value="InterPro"/>
</dbReference>
<dbReference type="GO" id="GO:0006412">
    <property type="term" value="P:translation"/>
    <property type="evidence" value="ECO:0007669"/>
    <property type="project" value="UniProtKB-UniRule"/>
</dbReference>
<dbReference type="FunFam" id="2.40.50.100:FF:000001">
    <property type="entry name" value="50S ribosomal protein L27"/>
    <property type="match status" value="1"/>
</dbReference>
<dbReference type="Gene3D" id="2.40.50.100">
    <property type="match status" value="1"/>
</dbReference>
<dbReference type="HAMAP" id="MF_00539">
    <property type="entry name" value="Ribosomal_bL27"/>
    <property type="match status" value="1"/>
</dbReference>
<dbReference type="InterPro" id="IPR001684">
    <property type="entry name" value="Ribosomal_bL27"/>
</dbReference>
<dbReference type="InterPro" id="IPR018261">
    <property type="entry name" value="Ribosomal_bL27_CS"/>
</dbReference>
<dbReference type="NCBIfam" id="TIGR00062">
    <property type="entry name" value="L27"/>
    <property type="match status" value="1"/>
</dbReference>
<dbReference type="PANTHER" id="PTHR15893:SF0">
    <property type="entry name" value="LARGE RIBOSOMAL SUBUNIT PROTEIN BL27M"/>
    <property type="match status" value="1"/>
</dbReference>
<dbReference type="PANTHER" id="PTHR15893">
    <property type="entry name" value="RIBOSOMAL PROTEIN L27"/>
    <property type="match status" value="1"/>
</dbReference>
<dbReference type="Pfam" id="PF01016">
    <property type="entry name" value="Ribosomal_L27"/>
    <property type="match status" value="1"/>
</dbReference>
<dbReference type="PRINTS" id="PR00063">
    <property type="entry name" value="RIBOSOMALL27"/>
</dbReference>
<dbReference type="SUPFAM" id="SSF110324">
    <property type="entry name" value="Ribosomal L27 protein-like"/>
    <property type="match status" value="1"/>
</dbReference>
<dbReference type="PROSITE" id="PS00831">
    <property type="entry name" value="RIBOSOMAL_L27"/>
    <property type="match status" value="1"/>
</dbReference>
<evidence type="ECO:0000255" key="1">
    <source>
        <dbReference type="HAMAP-Rule" id="MF_00539"/>
    </source>
</evidence>
<evidence type="ECO:0000256" key="2">
    <source>
        <dbReference type="SAM" id="MobiDB-lite"/>
    </source>
</evidence>
<evidence type="ECO:0000305" key="3"/>